<name>M10L1_MOUSE</name>
<dbReference type="EC" id="3.6.4.13" evidence="15"/>
<dbReference type="EMBL" id="AF285587">
    <property type="protein sequence ID" value="AAK31966.1"/>
    <property type="molecule type" value="mRNA"/>
</dbReference>
<dbReference type="EMBL" id="AF340211">
    <property type="protein sequence ID" value="AAK77049.1"/>
    <property type="molecule type" value="mRNA"/>
</dbReference>
<dbReference type="EMBL" id="AY303754">
    <property type="protein sequence ID" value="AAP60176.1"/>
    <property type="status" value="ALT_INIT"/>
    <property type="molecule type" value="mRNA"/>
</dbReference>
<dbReference type="EMBL" id="AK084786">
    <property type="protein sequence ID" value="BAC39279.1"/>
    <property type="molecule type" value="mRNA"/>
</dbReference>
<dbReference type="CCDS" id="CCDS27737.1">
    <molecule id="Q99MV5-1"/>
</dbReference>
<dbReference type="RefSeq" id="NP_112550.2">
    <property type="nucleotide sequence ID" value="NM_031260.2"/>
</dbReference>
<dbReference type="RefSeq" id="XP_006521621.1">
    <property type="nucleotide sequence ID" value="XM_006521558.3"/>
</dbReference>
<dbReference type="SMR" id="Q99MV5"/>
<dbReference type="BioGRID" id="219930">
    <property type="interactions" value="2"/>
</dbReference>
<dbReference type="FunCoup" id="Q99MV5">
    <property type="interactions" value="28"/>
</dbReference>
<dbReference type="STRING" id="10090.ENSMUSP00000015509"/>
<dbReference type="iPTMnet" id="Q99MV5"/>
<dbReference type="PhosphoSitePlus" id="Q99MV5"/>
<dbReference type="jPOST" id="Q99MV5"/>
<dbReference type="PaxDb" id="10090-ENSMUSP00000118437"/>
<dbReference type="ProteomicsDB" id="292063">
    <molecule id="Q99MV5-1"/>
</dbReference>
<dbReference type="ProteomicsDB" id="292064">
    <molecule id="Q99MV5-2"/>
</dbReference>
<dbReference type="ProteomicsDB" id="292065">
    <molecule id="Q99MV5-3"/>
</dbReference>
<dbReference type="DNASU" id="83456"/>
<dbReference type="GeneID" id="83456"/>
<dbReference type="KEGG" id="mmu:83456"/>
<dbReference type="AGR" id="MGI:1891384"/>
<dbReference type="CTD" id="54456"/>
<dbReference type="MGI" id="MGI:1891384">
    <property type="gene designation" value="Mov10l1"/>
</dbReference>
<dbReference type="eggNOG" id="KOG1804">
    <property type="taxonomic scope" value="Eukaryota"/>
</dbReference>
<dbReference type="InParanoid" id="Q99MV5"/>
<dbReference type="BioGRID-ORCS" id="83456">
    <property type="hits" value="1 hit in 80 CRISPR screens"/>
</dbReference>
<dbReference type="ChiTaRS" id="Mov10l1">
    <property type="organism name" value="mouse"/>
</dbReference>
<dbReference type="PRO" id="PR:Q99MV5"/>
<dbReference type="Proteomes" id="UP000000589">
    <property type="component" value="Unplaced"/>
</dbReference>
<dbReference type="RNAct" id="Q99MV5">
    <property type="molecule type" value="protein"/>
</dbReference>
<dbReference type="GO" id="GO:0005829">
    <property type="term" value="C:cytosol"/>
    <property type="evidence" value="ECO:0000304"/>
    <property type="project" value="Reactome"/>
</dbReference>
<dbReference type="GO" id="GO:0043186">
    <property type="term" value="C:P granule"/>
    <property type="evidence" value="ECO:0000314"/>
    <property type="project" value="UniProtKB"/>
</dbReference>
<dbReference type="GO" id="GO:0071546">
    <property type="term" value="C:pi-body"/>
    <property type="evidence" value="ECO:0000314"/>
    <property type="project" value="UniProtKB"/>
</dbReference>
<dbReference type="GO" id="GO:0005524">
    <property type="term" value="F:ATP binding"/>
    <property type="evidence" value="ECO:0007669"/>
    <property type="project" value="UniProtKB-KW"/>
</dbReference>
<dbReference type="GO" id="GO:0016887">
    <property type="term" value="F:ATP hydrolysis activity"/>
    <property type="evidence" value="ECO:0007669"/>
    <property type="project" value="RHEA"/>
</dbReference>
<dbReference type="GO" id="GO:0034584">
    <property type="term" value="F:piRNA binding"/>
    <property type="evidence" value="ECO:0000314"/>
    <property type="project" value="UniProtKB"/>
</dbReference>
<dbReference type="GO" id="GO:0003724">
    <property type="term" value="F:RNA helicase activity"/>
    <property type="evidence" value="ECO:0000315"/>
    <property type="project" value="UniProtKB"/>
</dbReference>
<dbReference type="GO" id="GO:0030154">
    <property type="term" value="P:cell differentiation"/>
    <property type="evidence" value="ECO:0007669"/>
    <property type="project" value="UniProtKB-KW"/>
</dbReference>
<dbReference type="GO" id="GO:0007141">
    <property type="term" value="P:male meiosis I"/>
    <property type="evidence" value="ECO:0000315"/>
    <property type="project" value="UniProtKB"/>
</dbReference>
<dbReference type="GO" id="GO:0007140">
    <property type="term" value="P:male meiotic nuclear division"/>
    <property type="evidence" value="ECO:0000315"/>
    <property type="project" value="UniProtKB"/>
</dbReference>
<dbReference type="GO" id="GO:0045786">
    <property type="term" value="P:negative regulation of cell cycle"/>
    <property type="evidence" value="ECO:0000314"/>
    <property type="project" value="UniProtKB"/>
</dbReference>
<dbReference type="GO" id="GO:0034587">
    <property type="term" value="P:piRNA processing"/>
    <property type="evidence" value="ECO:0000315"/>
    <property type="project" value="UniProtKB"/>
</dbReference>
<dbReference type="GO" id="GO:0007283">
    <property type="term" value="P:spermatogenesis"/>
    <property type="evidence" value="ECO:0000315"/>
    <property type="project" value="UniProtKB"/>
</dbReference>
<dbReference type="GO" id="GO:0141196">
    <property type="term" value="P:transposable element silencing by piRNA-mediated DNA methylation"/>
    <property type="evidence" value="ECO:0000315"/>
    <property type="project" value="UniProtKB"/>
</dbReference>
<dbReference type="CDD" id="cd18078">
    <property type="entry name" value="DEXXQc_Mov10L1"/>
    <property type="match status" value="1"/>
</dbReference>
<dbReference type="CDD" id="cd18808">
    <property type="entry name" value="SF1_C_Upf1"/>
    <property type="match status" value="1"/>
</dbReference>
<dbReference type="FunFam" id="3.40.50.300:FF:000999">
    <property type="entry name" value="Mov10 like RISC complex RNA helicase 1"/>
    <property type="match status" value="1"/>
</dbReference>
<dbReference type="FunFam" id="3.40.50.300:FF:000864">
    <property type="entry name" value="Mov10-like RISC complex RNA helicase 1"/>
    <property type="match status" value="1"/>
</dbReference>
<dbReference type="Gene3D" id="3.40.50.300">
    <property type="entry name" value="P-loop containing nucleotide triphosphate hydrolases"/>
    <property type="match status" value="2"/>
</dbReference>
<dbReference type="InterPro" id="IPR041679">
    <property type="entry name" value="DNA2/NAM7-like_C"/>
</dbReference>
<dbReference type="InterPro" id="IPR041677">
    <property type="entry name" value="DNA2/NAM7_AAA_11"/>
</dbReference>
<dbReference type="InterPro" id="IPR049080">
    <property type="entry name" value="MOV-10-like_beta-barrel"/>
</dbReference>
<dbReference type="InterPro" id="IPR027417">
    <property type="entry name" value="P-loop_NTPase"/>
</dbReference>
<dbReference type="InterPro" id="IPR047187">
    <property type="entry name" value="SF1_C_Upf1"/>
</dbReference>
<dbReference type="PANTHER" id="PTHR45418">
    <property type="entry name" value="CANCER/TESTIS ANTIGEN 55"/>
    <property type="match status" value="1"/>
</dbReference>
<dbReference type="PANTHER" id="PTHR45418:SF1">
    <property type="entry name" value="CANCER_TESTIS ANTIGEN 55"/>
    <property type="match status" value="1"/>
</dbReference>
<dbReference type="Pfam" id="PF13086">
    <property type="entry name" value="AAA_11"/>
    <property type="match status" value="2"/>
</dbReference>
<dbReference type="Pfam" id="PF13087">
    <property type="entry name" value="AAA_12"/>
    <property type="match status" value="1"/>
</dbReference>
<dbReference type="Pfam" id="PF21634">
    <property type="entry name" value="MOV-10_beta-barrel"/>
    <property type="match status" value="1"/>
</dbReference>
<dbReference type="SUPFAM" id="SSF52540">
    <property type="entry name" value="P-loop containing nucleoside triphosphate hydrolases"/>
    <property type="match status" value="1"/>
</dbReference>
<feature type="chain" id="PRO_0000080707" description="RNA helicase Mov10l1">
    <location>
        <begin position="1"/>
        <end position="1187"/>
    </location>
</feature>
<feature type="repeat" description="1">
    <location>
        <begin position="642"/>
        <end position="652"/>
    </location>
</feature>
<feature type="repeat" description="2">
    <location>
        <begin position="653"/>
        <end position="663"/>
    </location>
</feature>
<feature type="repeat" description="3">
    <location>
        <begin position="664"/>
        <end position="674"/>
    </location>
</feature>
<feature type="repeat" description="4">
    <location>
        <begin position="675"/>
        <end position="685"/>
    </location>
</feature>
<feature type="repeat" description="5">
    <location>
        <begin position="686"/>
        <end position="696"/>
    </location>
</feature>
<feature type="region of interest" description="Disordered" evidence="2">
    <location>
        <begin position="273"/>
        <end position="347"/>
    </location>
</feature>
<feature type="region of interest" description="5 X 11 AA tandem repeats of [TI]-R-N-[DN]-[GS]-Q-[SP]-I-T-[NK]-[IVN]">
    <location>
        <begin position="642"/>
        <end position="696"/>
    </location>
</feature>
<feature type="region of interest" description="Disordered" evidence="2">
    <location>
        <begin position="686"/>
        <end position="727"/>
    </location>
</feature>
<feature type="short sequence motif" description="DEAG box">
    <location>
        <begin position="888"/>
        <end position="891"/>
    </location>
</feature>
<feature type="compositionally biased region" description="Basic and acidic residues" evidence="2">
    <location>
        <begin position="296"/>
        <end position="307"/>
    </location>
</feature>
<feature type="compositionally biased region" description="Basic and acidic residues" evidence="2">
    <location>
        <begin position="322"/>
        <end position="339"/>
    </location>
</feature>
<feature type="compositionally biased region" description="Basic and acidic residues" evidence="2">
    <location>
        <begin position="699"/>
        <end position="720"/>
    </location>
</feature>
<feature type="binding site" evidence="1">
    <location>
        <begin position="772"/>
        <end position="779"/>
    </location>
    <ligand>
        <name>ATP</name>
        <dbReference type="ChEBI" id="CHEBI:30616"/>
    </ligand>
</feature>
<feature type="splice variant" id="VSP_010949" description="In isoform 3." evidence="11">
    <location>
        <begin position="1"/>
        <end position="825"/>
    </location>
</feature>
<feature type="splice variant" id="VSP_003392" description="In isoform 2." evidence="10">
    <location>
        <begin position="1"/>
        <end position="637"/>
    </location>
</feature>
<feature type="mutagenesis site" description="Catalytically inactive mutant. Homozygous knockin male mice are sterile and display meiotic arrest at the zygotene-like stage of prophase I. LINE1 retrotransposons are derepressed and piRNA biogenesis is abolished." evidence="9">
    <original>K</original>
    <variation>A</variation>
    <location>
        <position position="778"/>
    </location>
</feature>
<feature type="mutagenesis site" description="Isoform 2: Abolishes the suppressor of cell proliferation activity." evidence="4">
    <original>DEAGQ</original>
    <variation>GGAAG</variation>
    <location>
        <begin position="888"/>
        <end position="892"/>
    </location>
</feature>
<feature type="sequence conflict" description="In Ref. 2 and 4." evidence="12" ref="2 4">
    <original>P</original>
    <variation>L</variation>
    <location>
        <position position="821"/>
    </location>
</feature>
<gene>
    <name evidence="16" type="primary">Mov10l1</name>
    <name evidence="10" type="synonym">Champ</name>
</gene>
<proteinExistence type="evidence at protein level"/>
<sequence length="1187" mass="132792">MIDDLIYFSNDAVTSTVLLNVGQEVIAVVEENKVSNGLKAIRVEAVSDKWEDDSKNSSKGLSDSSPRVLIGCVTSMLEGAGYISQTTYFSLESVCEGFHPCKGDWVEAEYWIRPGTWSSEAISVKPLRYKRVDKVCISSLCGRNGVIEDSIFFSLDSLKLPEGYIPRRHDIVNAVVVESSQSCYIWRALCMTPVKRDATLGEAPQEPYGALLLKNKGDIEVTRMTSFGTLKEGESKSIVIWIENKGKFSRELVSCRLANWDKAHQFRFETQGRSKSCPGAAAGSVPEGENVNSLNHHREDKTDEIPESRLANSTEISPDGCACKEESREKGNTPEKQEPEPGGLIPPGEKTHIVVTCSAKNPGRCKELLLLCFSDFLIGRHLEVSVVSSEEALIAVREPFSWKKPKSSQTLVSAKTTVVVTTQKRNSRRQLPSFLPQYPIPDRLKKCVEQKIDILTFQPLLAELLNMSNYKEKFSTLLWLEEIHAEIELKEYNMSRVVLKRKGDLLVLEVPGLAESRPSLYAGDKLILKSQEYNGHVIEYIGYVMEIHEEDVTLKLNPGFEQMYNFEPMDVEFTYNRTTSRRCHYALEQVIHLGVKVLFPEEIILQSPQVTGNWSLAQDTKNDGQSITNITRNDGQSMTKVTRNDSQSITNIIRNDGQSITNVTRNDGQPITKVTRNNSQSITNITRNDGQPITKNKKTVKDQTKHTTEERHVGTTDQPEKASSTAETMDEIQIPKARDKEFFNPVLNENQKLAVRRILSGDCRPLPYILFGPPGTGKTVTIIEAVLQVHYALPDSRILVCAPSNSAADLVCLRLHESKVPKPAAMVRVNATCRFEETIIDAIKPYCRDGEDIWRASRFRIIITTCSSAGLFYQIGVRVGYFTHVFVDEAGQASEPECLIPLGLISDINGQIVLAGDPMQLGPVIKSRLAMAYGLNVSMLERLMSRPAYLRDENAFGACGAYNPLLVTKLVKNYRSHSALLALPSRLFYHRELEVCADPKVVTSLLGWEKLPRKGFPLIFHGVRGNEAREGRSPSWFSPAEAVQVMRYCCLLARSVSSQVSSKDIGVITPYRKQVEKIKILLRNVDLTDIKVGSVEEFQGQEYLVIVISTVRSNEDRFEDDRYFLGFLSNSKRFNVAITRPKALLIILGNPHVLVRDPCFGALLEYSVSNGVYTGCDLPPELQALQK</sequence>
<reference key="1">
    <citation type="journal article" date="2001" name="Nat. Genet.">
        <title>An abundance of X-linked genes expressed in spermatogonia.</title>
        <authorList>
            <person name="Wang P.J."/>
            <person name="McCarrey J.R."/>
            <person name="Yang F."/>
            <person name="Page D.C."/>
        </authorList>
    </citation>
    <scope>NUCLEOTIDE SEQUENCE [MRNA] (ISOFORM 1)</scope>
    <scope>TISSUE SPECIFICITY</scope>
    <source>
        <tissue>Testis</tissue>
    </source>
</reference>
<reference key="2">
    <citation type="journal article" date="2001" name="Dev. Biol.">
        <title>CHAMP, a novel cardiac-specific helicase regulated by MEF2C.</title>
        <authorList>
            <person name="Liu Z.-P."/>
            <person name="Nakagawa O."/>
            <person name="Nakagawa M."/>
            <person name="Yanagisawa H."/>
            <person name="Passier R."/>
            <person name="Richardson J.A."/>
            <person name="Srivastava D."/>
            <person name="Olson E.N."/>
        </authorList>
    </citation>
    <scope>NUCLEOTIDE SEQUENCE [MRNA] (ISOFORM 2)</scope>
    <source>
        <strain>NIH Swiss</strain>
        <tissue>Heart</tissue>
    </source>
</reference>
<reference key="3">
    <citation type="journal article" date="2003" name="J. Biol. Chem.">
        <title>Csm, a cardiac-specific isoform of the RNA helicase Mov10l1, is regulated by Nkx2.5 in embryonic heart.</title>
        <authorList>
            <person name="Ueyama T."/>
            <person name="Kasahara H."/>
            <person name="Ishiwata T."/>
            <person name="Yamasaki N."/>
            <person name="Izumo S."/>
        </authorList>
    </citation>
    <scope>NUCLEOTIDE SEQUENCE [MRNA] (ISOFORM 3)</scope>
    <scope>INDUCTION</scope>
    <scope>TISSUE SPECIFICITY</scope>
    <source>
        <strain>NIH Swiss</strain>
    </source>
</reference>
<reference key="4">
    <citation type="journal article" date="2005" name="Science">
        <title>The transcriptional landscape of the mammalian genome.</title>
        <authorList>
            <person name="Carninci P."/>
            <person name="Kasukawa T."/>
            <person name="Katayama S."/>
            <person name="Gough J."/>
            <person name="Frith M.C."/>
            <person name="Maeda N."/>
            <person name="Oyama R."/>
            <person name="Ravasi T."/>
            <person name="Lenhard B."/>
            <person name="Wells C."/>
            <person name="Kodzius R."/>
            <person name="Shimokawa K."/>
            <person name="Bajic V.B."/>
            <person name="Brenner S.E."/>
            <person name="Batalov S."/>
            <person name="Forrest A.R."/>
            <person name="Zavolan M."/>
            <person name="Davis M.J."/>
            <person name="Wilming L.G."/>
            <person name="Aidinis V."/>
            <person name="Allen J.E."/>
            <person name="Ambesi-Impiombato A."/>
            <person name="Apweiler R."/>
            <person name="Aturaliya R.N."/>
            <person name="Bailey T.L."/>
            <person name="Bansal M."/>
            <person name="Baxter L."/>
            <person name="Beisel K.W."/>
            <person name="Bersano T."/>
            <person name="Bono H."/>
            <person name="Chalk A.M."/>
            <person name="Chiu K.P."/>
            <person name="Choudhary V."/>
            <person name="Christoffels A."/>
            <person name="Clutterbuck D.R."/>
            <person name="Crowe M.L."/>
            <person name="Dalla E."/>
            <person name="Dalrymple B.P."/>
            <person name="de Bono B."/>
            <person name="Della Gatta G."/>
            <person name="di Bernardo D."/>
            <person name="Down T."/>
            <person name="Engstrom P."/>
            <person name="Fagiolini M."/>
            <person name="Faulkner G."/>
            <person name="Fletcher C.F."/>
            <person name="Fukushima T."/>
            <person name="Furuno M."/>
            <person name="Futaki S."/>
            <person name="Gariboldi M."/>
            <person name="Georgii-Hemming P."/>
            <person name="Gingeras T.R."/>
            <person name="Gojobori T."/>
            <person name="Green R.E."/>
            <person name="Gustincich S."/>
            <person name="Harbers M."/>
            <person name="Hayashi Y."/>
            <person name="Hensch T.K."/>
            <person name="Hirokawa N."/>
            <person name="Hill D."/>
            <person name="Huminiecki L."/>
            <person name="Iacono M."/>
            <person name="Ikeo K."/>
            <person name="Iwama A."/>
            <person name="Ishikawa T."/>
            <person name="Jakt M."/>
            <person name="Kanapin A."/>
            <person name="Katoh M."/>
            <person name="Kawasawa Y."/>
            <person name="Kelso J."/>
            <person name="Kitamura H."/>
            <person name="Kitano H."/>
            <person name="Kollias G."/>
            <person name="Krishnan S.P."/>
            <person name="Kruger A."/>
            <person name="Kummerfeld S.K."/>
            <person name="Kurochkin I.V."/>
            <person name="Lareau L.F."/>
            <person name="Lazarevic D."/>
            <person name="Lipovich L."/>
            <person name="Liu J."/>
            <person name="Liuni S."/>
            <person name="McWilliam S."/>
            <person name="Madan Babu M."/>
            <person name="Madera M."/>
            <person name="Marchionni L."/>
            <person name="Matsuda H."/>
            <person name="Matsuzawa S."/>
            <person name="Miki H."/>
            <person name="Mignone F."/>
            <person name="Miyake S."/>
            <person name="Morris K."/>
            <person name="Mottagui-Tabar S."/>
            <person name="Mulder N."/>
            <person name="Nakano N."/>
            <person name="Nakauchi H."/>
            <person name="Ng P."/>
            <person name="Nilsson R."/>
            <person name="Nishiguchi S."/>
            <person name="Nishikawa S."/>
            <person name="Nori F."/>
            <person name="Ohara O."/>
            <person name="Okazaki Y."/>
            <person name="Orlando V."/>
            <person name="Pang K.C."/>
            <person name="Pavan W.J."/>
            <person name="Pavesi G."/>
            <person name="Pesole G."/>
            <person name="Petrovsky N."/>
            <person name="Piazza S."/>
            <person name="Reed J."/>
            <person name="Reid J.F."/>
            <person name="Ring B.Z."/>
            <person name="Ringwald M."/>
            <person name="Rost B."/>
            <person name="Ruan Y."/>
            <person name="Salzberg S.L."/>
            <person name="Sandelin A."/>
            <person name="Schneider C."/>
            <person name="Schoenbach C."/>
            <person name="Sekiguchi K."/>
            <person name="Semple C.A."/>
            <person name="Seno S."/>
            <person name="Sessa L."/>
            <person name="Sheng Y."/>
            <person name="Shibata Y."/>
            <person name="Shimada H."/>
            <person name="Shimada K."/>
            <person name="Silva D."/>
            <person name="Sinclair B."/>
            <person name="Sperling S."/>
            <person name="Stupka E."/>
            <person name="Sugiura K."/>
            <person name="Sultana R."/>
            <person name="Takenaka Y."/>
            <person name="Taki K."/>
            <person name="Tammoja K."/>
            <person name="Tan S.L."/>
            <person name="Tang S."/>
            <person name="Taylor M.S."/>
            <person name="Tegner J."/>
            <person name="Teichmann S.A."/>
            <person name="Ueda H.R."/>
            <person name="van Nimwegen E."/>
            <person name="Verardo R."/>
            <person name="Wei C.L."/>
            <person name="Yagi K."/>
            <person name="Yamanishi H."/>
            <person name="Zabarovsky E."/>
            <person name="Zhu S."/>
            <person name="Zimmer A."/>
            <person name="Hide W."/>
            <person name="Bult C."/>
            <person name="Grimmond S.M."/>
            <person name="Teasdale R.D."/>
            <person name="Liu E.T."/>
            <person name="Brusic V."/>
            <person name="Quackenbush J."/>
            <person name="Wahlestedt C."/>
            <person name="Mattick J.S."/>
            <person name="Hume D.A."/>
            <person name="Kai C."/>
            <person name="Sasaki D."/>
            <person name="Tomaru Y."/>
            <person name="Fukuda S."/>
            <person name="Kanamori-Katayama M."/>
            <person name="Suzuki M."/>
            <person name="Aoki J."/>
            <person name="Arakawa T."/>
            <person name="Iida J."/>
            <person name="Imamura K."/>
            <person name="Itoh M."/>
            <person name="Kato T."/>
            <person name="Kawaji H."/>
            <person name="Kawagashira N."/>
            <person name="Kawashima T."/>
            <person name="Kojima M."/>
            <person name="Kondo S."/>
            <person name="Konno H."/>
            <person name="Nakano K."/>
            <person name="Ninomiya N."/>
            <person name="Nishio T."/>
            <person name="Okada M."/>
            <person name="Plessy C."/>
            <person name="Shibata K."/>
            <person name="Shiraki T."/>
            <person name="Suzuki S."/>
            <person name="Tagami M."/>
            <person name="Waki K."/>
            <person name="Watahiki A."/>
            <person name="Okamura-Oho Y."/>
            <person name="Suzuki H."/>
            <person name="Kawai J."/>
            <person name="Hayashizaki Y."/>
        </authorList>
    </citation>
    <scope>NUCLEOTIDE SEQUENCE [LARGE SCALE MRNA] OF 769-1187</scope>
    <source>
        <strain>C57BL/6J</strain>
        <tissue>Heart</tissue>
    </source>
</reference>
<reference key="5">
    <citation type="journal article" date="2002" name="Proc. Natl. Acad. Sci. U.S.A.">
        <title>Suppression of proliferation and cardiomyocyte hypertrophy by CHAMP, a cardiac-specific RNA helicase.</title>
        <authorList>
            <person name="Liu Z.-P."/>
            <person name="Olson E.N."/>
        </authorList>
    </citation>
    <scope>FUNCTION (ISOFORM 2)</scope>
    <scope>SUBCELLULAR LOCATION (ISOFORM 2)</scope>
    <scope>MUTAGENESIS OF 888-ASP--GLN-892</scope>
    <scope>TISSUE SPECIFICITY</scope>
    <scope>DEVELOPMENTAL STAGE</scope>
</reference>
<reference key="6">
    <citation type="journal article" date="2010" name="Cell">
        <title>A tissue-specific atlas of mouse protein phosphorylation and expression.</title>
        <authorList>
            <person name="Huttlin E.L."/>
            <person name="Jedrychowski M.P."/>
            <person name="Elias J.E."/>
            <person name="Goswami T."/>
            <person name="Rad R."/>
            <person name="Beausoleil S.A."/>
            <person name="Villen J."/>
            <person name="Haas W."/>
            <person name="Sowa M.E."/>
            <person name="Gygi S.P."/>
        </authorList>
    </citation>
    <scope>IDENTIFICATION BY MASS SPECTROMETRY [LARGE SCALE ANALYSIS]</scope>
    <source>
        <tissue>Testis</tissue>
    </source>
</reference>
<reference key="7">
    <citation type="journal article" date="2010" name="Proc. Natl. Acad. Sci. U.S.A.">
        <title>Mouse MOV10L1 associates with Piwi proteins and is an essential component of the Piwi-interacting RNA (piRNA) pathway.</title>
        <authorList>
            <person name="Zheng K."/>
            <person name="Xiol J."/>
            <person name="Reuter M."/>
            <person name="Eckardt S."/>
            <person name="Leu N.A."/>
            <person name="McLaughlin K.J."/>
            <person name="Stark A."/>
            <person name="Sachidanandam R."/>
            <person name="Pillai R.S."/>
            <person name="Wang P.J."/>
        </authorList>
    </citation>
    <scope>FUNCTION</scope>
    <scope>SUBCELLULAR LOCATION</scope>
    <scope>TISSUE SPECIFICITY</scope>
    <scope>DISRUPTION PHENOTYPE</scope>
    <scope>INTERACTION WITH PIWIL1; PIWIL2 AND PIWIL4</scope>
</reference>
<reference key="8">
    <citation type="journal article" date="2010" name="Proc. Natl. Acad. Sci. U.S.A.">
        <title>MOV10L1 is necessary for protection of spermatocytes against retrotransposons by Piwi-interacting RNAs.</title>
        <authorList>
            <person name="Frost R.J."/>
            <person name="Hamra F.K."/>
            <person name="Richardson J.A."/>
            <person name="Qi X."/>
            <person name="Bassel-Duby R."/>
            <person name="Olson E.N."/>
        </authorList>
    </citation>
    <scope>FUNCTION</scope>
    <scope>TISSUE SPECIFICITY</scope>
    <scope>DISRUPTION PHENOTYPE</scope>
    <scope>INTERACTION WITH HSPA2; PIWIL2 AND PIWIL4</scope>
</reference>
<reference key="9">
    <citation type="journal article" date="2012" name="PLoS Genet.">
        <title>Blockade of pachytene piRNA biogenesis reveals a novel requirement for maintaining post-meiotic germline genome integrity.</title>
        <authorList>
            <person name="Zheng K."/>
            <person name="Wang P.J."/>
        </authorList>
    </citation>
    <scope>FUNCTION</scope>
    <scope>SUBCELLULAR LOCATION</scope>
    <scope>DISRUPTION PHENOTYPE</scope>
</reference>
<reference key="10">
    <citation type="journal article" date="2015" name="Genes Dev.">
        <title>The RNA helicase MOV10L1 binds piRNA precursors to initiate piRNA processing.</title>
        <authorList>
            <person name="Vourekas A."/>
            <person name="Zheng K."/>
            <person name="Fu Q."/>
            <person name="Maragkakis M."/>
            <person name="Alexiou P."/>
            <person name="Ma J."/>
            <person name="Pillai R.S."/>
            <person name="Mourelatos Z."/>
            <person name="Wang P.J."/>
        </authorList>
    </citation>
    <scope>FUNCTION</scope>
    <scope>CATALYTIC ACTIVITY</scope>
    <scope>RNA-BINDING</scope>
    <scope>INTERACTION WITH PLD6</scope>
    <scope>MUTAGENESIS OF LYS-778</scope>
</reference>
<evidence type="ECO:0000255" key="1"/>
<evidence type="ECO:0000256" key="2">
    <source>
        <dbReference type="SAM" id="MobiDB-lite"/>
    </source>
</evidence>
<evidence type="ECO:0000269" key="3">
    <source>
    </source>
</evidence>
<evidence type="ECO:0000269" key="4">
    <source>
    </source>
</evidence>
<evidence type="ECO:0000269" key="5">
    <source>
    </source>
</evidence>
<evidence type="ECO:0000269" key="6">
    <source>
    </source>
</evidence>
<evidence type="ECO:0000269" key="7">
    <source>
    </source>
</evidence>
<evidence type="ECO:0000269" key="8">
    <source>
    </source>
</evidence>
<evidence type="ECO:0000269" key="9">
    <source>
    </source>
</evidence>
<evidence type="ECO:0000303" key="10">
    <source>
    </source>
</evidence>
<evidence type="ECO:0000303" key="11">
    <source>
    </source>
</evidence>
<evidence type="ECO:0000305" key="12"/>
<evidence type="ECO:0000305" key="13">
    <source>
    </source>
</evidence>
<evidence type="ECO:0000305" key="14">
    <source>
    </source>
</evidence>
<evidence type="ECO:0000305" key="15">
    <source>
    </source>
</evidence>
<evidence type="ECO:0000312" key="16">
    <source>
        <dbReference type="MGI" id="MGI:1891384"/>
    </source>
</evidence>
<protein>
    <recommendedName>
        <fullName evidence="12">RNA helicase Mov10l1</fullName>
        <ecNumber evidence="15">3.6.4.13</ecNumber>
    </recommendedName>
    <alternativeName>
        <fullName evidence="10">Cardiac helicase activated by MEF2 protein</fullName>
    </alternativeName>
    <alternativeName>
        <fullName evidence="10">Cardiac-specific RNA helicase</fullName>
    </alternativeName>
    <alternativeName>
        <fullName evidence="12">Moloney leukemia virus 10-like protein 1 homolog</fullName>
        <shortName evidence="12">MOV10-like protein 1 homolog</shortName>
    </alternativeName>
</protein>
<organism>
    <name type="scientific">Mus musculus</name>
    <name type="common">Mouse</name>
    <dbReference type="NCBI Taxonomy" id="10090"/>
    <lineage>
        <taxon>Eukaryota</taxon>
        <taxon>Metazoa</taxon>
        <taxon>Chordata</taxon>
        <taxon>Craniata</taxon>
        <taxon>Vertebrata</taxon>
        <taxon>Euteleostomi</taxon>
        <taxon>Mammalia</taxon>
        <taxon>Eutheria</taxon>
        <taxon>Euarchontoglires</taxon>
        <taxon>Glires</taxon>
        <taxon>Rodentia</taxon>
        <taxon>Myomorpha</taxon>
        <taxon>Muroidea</taxon>
        <taxon>Muridae</taxon>
        <taxon>Murinae</taxon>
        <taxon>Mus</taxon>
        <taxon>Mus</taxon>
    </lineage>
</organism>
<accession>Q99MV5</accession>
<accession>Q7TPA9</accession>
<accession>Q8C3W0</accession>
<accession>Q924C2</accession>
<keyword id="KW-0025">Alternative splicing</keyword>
<keyword id="KW-0067">ATP-binding</keyword>
<keyword id="KW-0963">Cytoplasm</keyword>
<keyword id="KW-0217">Developmental protein</keyword>
<keyword id="KW-0221">Differentiation</keyword>
<keyword id="KW-0347">Helicase</keyword>
<keyword id="KW-0378">Hydrolase</keyword>
<keyword id="KW-0469">Meiosis</keyword>
<keyword id="KW-0547">Nucleotide-binding</keyword>
<keyword id="KW-1185">Reference proteome</keyword>
<keyword id="KW-0677">Repeat</keyword>
<keyword id="KW-0694">RNA-binding</keyword>
<keyword id="KW-0943">RNA-mediated gene silencing</keyword>
<keyword id="KW-0744">Spermatogenesis</keyword>
<comment type="function">
    <molecule>Isoform 1</molecule>
    <text evidence="6 7 8 9">ATP-dependent RNA helicase required during spermatogenesis to repress transposable elements and prevent their mobilization, which is essential for germline integrity (PubMed:20534472, PubMed:20547853, PubMed:23166510, PubMed:25762440). Acts via the piRNA metabolic process, which mediates the repression of transposable elements during meiosis by forming complexes composed of piRNAs and Piwi proteins and governs the methylation and subsequent repression of transposons (PubMed:20534472, PubMed:20547853, PubMed:23166510, PubMed:25762440). Involved in the primary piRNA metabolic process (PubMed:20534472, PubMed:20547853, PubMed:23166510, PubMed:25762440). Specifically binds to piRNA precursors and promotes the generation of intermediate piRNA processing fragments that are subsequently loaded to Piwi proteins (PubMed:25762440). Acts via its ATP-dependent RNA helicase activity: displays 5'-3' RNA unwinding activity and probably mediates unwinding and funneling of single-stranded piRNA precursor transcripts to the endonuclease that catalyzes the first cleavage step of piRNA processing to generate piRNA intermediate fragments that are subsequently loaded to Piwi proteins (PubMed:25762440).</text>
</comment>
<comment type="function">
    <molecule>Isoform 2</molecule>
    <text evidence="13">May act downstream of MEF2C during heart formation. Acts as a cardiac-specific suppressor of cardiomyocyte hypertrophy and cell cycle progression, suggesting that it may suppress these processes through the regulation of CDKN1A. Such results however require additional evidence.</text>
</comment>
<comment type="catalytic activity">
    <reaction evidence="15">
        <text>ATP + H2O = ADP + phosphate + H(+)</text>
        <dbReference type="Rhea" id="RHEA:13065"/>
        <dbReference type="ChEBI" id="CHEBI:15377"/>
        <dbReference type="ChEBI" id="CHEBI:15378"/>
        <dbReference type="ChEBI" id="CHEBI:30616"/>
        <dbReference type="ChEBI" id="CHEBI:43474"/>
        <dbReference type="ChEBI" id="CHEBI:456216"/>
        <dbReference type="EC" id="3.6.4.13"/>
    </reaction>
</comment>
<comment type="subunit">
    <text evidence="6 7 9">Interacts with PIWIL1 (PubMed:20534472). Interacts with PIWIL2 (PubMed:20534472, PubMed:20547853). Interacts with PIWIL4 (PubMed:20534472, PubMed:20547853). Interacts with HSPA2 (PubMed:20547853). Interacts with PLD6 (PubMed:25762440).</text>
</comment>
<comment type="subcellular location">
    <molecule>Isoform 1</molecule>
    <subcellularLocation>
        <location evidence="6 8">Cytoplasm</location>
    </subcellularLocation>
    <text evidence="8 14">Component of the meiotic nuage, also named P granule, a germ-cell-specific organelle required to repress transposon activity during meiosis (PubMed:20534472, PubMed:23166510).</text>
</comment>
<comment type="subcellular location">
    <molecule>Isoform 2</molecule>
    <subcellularLocation>
        <location evidence="4">Cytoplasm</location>
    </subcellularLocation>
</comment>
<comment type="alternative products">
    <event type="alternative splicing"/>
    <isoform>
        <id>Q99MV5-1</id>
        <name>1</name>
        <sequence type="displayed"/>
    </isoform>
    <isoform>
        <id>Q99MV5-2</id>
        <name>2</name>
        <sequence type="described" ref="VSP_003392"/>
    </isoform>
    <isoform>
        <id>Q99MV5-3</id>
        <name>3</name>
        <name evidence="11">Csm</name>
        <name evidence="11">Cardiac-specific isoform of Mov10l1</name>
        <sequence type="described" ref="VSP_010949"/>
    </isoform>
    <text>Additional isoforms seem to exist.</text>
</comment>
<comment type="tissue specificity">
    <text evidence="3 4 5 7">Isoform 1: Specifically expressed in testis (PubMed:12754203). Isoform 1: In testis, present in pachytene spermatocytes but absent in postmeiotic spermatids (at protein level) (PubMed:20534472, PubMed:20547853). Isoform 2: Present in cardiomyocytes (at protein level) (PubMed:11279525). Isoform 2: Heart specific (PubMed:11854500). Isoform 3: Heart specific and is specifically expressed in cardiac myocytes (PubMed:12754203).</text>
</comment>
<comment type="developmental stage">
    <molecule>Isoform 2</molecule>
    <text evidence="4">Expression is first observed in the linear heart tube at 8 dpc. The highest expression is in the region that will give rise to the ventricular segments. At 9.5 dpc, the ventricular expression is maintained in the looped heart tube. In the adult, expression is observed exclusively within myocardial cells.</text>
</comment>
<comment type="induction">
    <text evidence="5">Isoform 2: Activated by MEF2C. Isoform 3: Activated by Nkx2-5.</text>
</comment>
<comment type="disruption phenotype">
    <text evidence="6 7 8">Mice are viable and healthy but show male sterility due to defects in spermatogenesis at early prophase of meiosis I (PubMed:20534472, PubMed:20547853, PubMed:23166510). Retrotransposons are derepressed due to DNA demethylation (PubMed:20534472). Defects are caused by impaired piRNA biogenesis during pachytene (PubMed:20534472, PubMed:20547853). The absence of pachytene piRNAs causes disruption of germ cell development and results in defects in post-meiotic genome integrity (PubMed:23166510). Mice do not show any cardiac abnormalities (PubMed:20547853).</text>
</comment>
<comment type="similarity">
    <text evidence="12">Belongs to the DNA2/NAM7 helicase family. SDE3 subfamily.</text>
</comment>
<comment type="sequence caution" evidence="12">
    <conflict type="erroneous initiation">
        <sequence resource="EMBL-CDS" id="AAP60176"/>
    </conflict>
</comment>